<evidence type="ECO:0000255" key="1">
    <source>
        <dbReference type="HAMAP-Rule" id="MF_00016"/>
    </source>
</evidence>
<reference key="1">
    <citation type="journal article" date="2009" name="J. Bacteriol.">
        <title>Genomic sequencing reveals regulatory mutations and recombinational events in the widely used MC4100 lineage of Escherichia coli K-12.</title>
        <authorList>
            <person name="Ferenci T."/>
            <person name="Zhou Z."/>
            <person name="Betteridge T."/>
            <person name="Ren Y."/>
            <person name="Liu Y."/>
            <person name="Feng L."/>
            <person name="Reeves P.R."/>
            <person name="Wang L."/>
        </authorList>
    </citation>
    <scope>NUCLEOTIDE SEQUENCE [LARGE SCALE GENOMIC DNA]</scope>
    <source>
        <strain>K12 / MC4100 / BW2952</strain>
    </source>
</reference>
<name>RUVB_ECOBW</name>
<feature type="chain" id="PRO_1000201833" description="Holliday junction branch migration complex subunit RuvB">
    <location>
        <begin position="1"/>
        <end position="336"/>
    </location>
</feature>
<feature type="region of interest" description="Large ATPase domain (RuvB-L)" evidence="1">
    <location>
        <begin position="4"/>
        <end position="184"/>
    </location>
</feature>
<feature type="region of interest" description="Small ATPAse domain (RuvB-S)" evidence="1">
    <location>
        <begin position="185"/>
        <end position="255"/>
    </location>
</feature>
<feature type="region of interest" description="Head domain (RuvB-H)" evidence="1">
    <location>
        <begin position="258"/>
        <end position="336"/>
    </location>
</feature>
<feature type="binding site" evidence="1">
    <location>
        <position position="23"/>
    </location>
    <ligand>
        <name>ATP</name>
        <dbReference type="ChEBI" id="CHEBI:30616"/>
    </ligand>
</feature>
<feature type="binding site" evidence="1">
    <location>
        <position position="24"/>
    </location>
    <ligand>
        <name>ATP</name>
        <dbReference type="ChEBI" id="CHEBI:30616"/>
    </ligand>
</feature>
<feature type="binding site" evidence="1">
    <location>
        <position position="65"/>
    </location>
    <ligand>
        <name>ATP</name>
        <dbReference type="ChEBI" id="CHEBI:30616"/>
    </ligand>
</feature>
<feature type="binding site" evidence="1">
    <location>
        <position position="68"/>
    </location>
    <ligand>
        <name>ATP</name>
        <dbReference type="ChEBI" id="CHEBI:30616"/>
    </ligand>
</feature>
<feature type="binding site" evidence="1">
    <location>
        <position position="69"/>
    </location>
    <ligand>
        <name>ATP</name>
        <dbReference type="ChEBI" id="CHEBI:30616"/>
    </ligand>
</feature>
<feature type="binding site" evidence="1">
    <location>
        <position position="69"/>
    </location>
    <ligand>
        <name>Mg(2+)</name>
        <dbReference type="ChEBI" id="CHEBI:18420"/>
    </ligand>
</feature>
<feature type="binding site" evidence="1">
    <location>
        <position position="70"/>
    </location>
    <ligand>
        <name>ATP</name>
        <dbReference type="ChEBI" id="CHEBI:30616"/>
    </ligand>
</feature>
<feature type="binding site" evidence="1">
    <location>
        <begin position="131"/>
        <end position="133"/>
    </location>
    <ligand>
        <name>ATP</name>
        <dbReference type="ChEBI" id="CHEBI:30616"/>
    </ligand>
</feature>
<feature type="binding site" evidence="1">
    <location>
        <position position="174"/>
    </location>
    <ligand>
        <name>ATP</name>
        <dbReference type="ChEBI" id="CHEBI:30616"/>
    </ligand>
</feature>
<feature type="binding site" evidence="1">
    <location>
        <position position="184"/>
    </location>
    <ligand>
        <name>ATP</name>
        <dbReference type="ChEBI" id="CHEBI:30616"/>
    </ligand>
</feature>
<feature type="binding site" evidence="1">
    <location>
        <position position="221"/>
    </location>
    <ligand>
        <name>ATP</name>
        <dbReference type="ChEBI" id="CHEBI:30616"/>
    </ligand>
</feature>
<feature type="binding site" evidence="1">
    <location>
        <position position="294"/>
    </location>
    <ligand>
        <name>DNA</name>
        <dbReference type="ChEBI" id="CHEBI:16991"/>
    </ligand>
</feature>
<feature type="binding site" evidence="1">
    <location>
        <position position="313"/>
    </location>
    <ligand>
        <name>DNA</name>
        <dbReference type="ChEBI" id="CHEBI:16991"/>
    </ligand>
</feature>
<feature type="binding site" evidence="1">
    <location>
        <position position="318"/>
    </location>
    <ligand>
        <name>DNA</name>
        <dbReference type="ChEBI" id="CHEBI:16991"/>
    </ligand>
</feature>
<accession>C4ZQE4</accession>
<keyword id="KW-0067">ATP-binding</keyword>
<keyword id="KW-0963">Cytoplasm</keyword>
<keyword id="KW-0227">DNA damage</keyword>
<keyword id="KW-0233">DNA recombination</keyword>
<keyword id="KW-0234">DNA repair</keyword>
<keyword id="KW-0238">DNA-binding</keyword>
<keyword id="KW-0378">Hydrolase</keyword>
<keyword id="KW-0547">Nucleotide-binding</keyword>
<keyword id="KW-0742">SOS response</keyword>
<comment type="function">
    <text evidence="1">The RuvA-RuvB-RuvC complex processes Holliday junction (HJ) DNA during genetic recombination and DNA repair, while the RuvA-RuvB complex plays an important role in the rescue of blocked DNA replication forks via replication fork reversal (RFR). RuvA specifically binds to HJ cruciform DNA, conferring on it an open structure. The RuvB hexamer acts as an ATP-dependent pump, pulling dsDNA into and through the RuvAB complex. RuvB forms 2 homohexamers on either side of HJ DNA bound by 1 or 2 RuvA tetramers; 4 subunits per hexamer contact DNA at a time. Coordinated motions by a converter formed by DNA-disengaged RuvB subunits stimulates ATP hydrolysis and nucleotide exchange. Immobilization of the converter enables RuvB to convert the ATP-contained energy into a lever motion, pulling 2 nucleotides of DNA out of the RuvA tetramer per ATP hydrolyzed, thus driving DNA branch migration. The RuvB motors rotate together with the DNA substrate, which together with the progressing nucleotide cycle form the mechanistic basis for DNA recombination by continuous HJ branch migration. Branch migration allows RuvC to scan DNA until it finds its consensus sequence, where it cleaves and resolves cruciform DNA.</text>
</comment>
<comment type="catalytic activity">
    <reaction evidence="1">
        <text>ATP + H2O = ADP + phosphate + H(+)</text>
        <dbReference type="Rhea" id="RHEA:13065"/>
        <dbReference type="ChEBI" id="CHEBI:15377"/>
        <dbReference type="ChEBI" id="CHEBI:15378"/>
        <dbReference type="ChEBI" id="CHEBI:30616"/>
        <dbReference type="ChEBI" id="CHEBI:43474"/>
        <dbReference type="ChEBI" id="CHEBI:456216"/>
    </reaction>
</comment>
<comment type="subunit">
    <text evidence="1">Homohexamer. Forms an RuvA(8)-RuvB(12)-Holliday junction (HJ) complex. HJ DNA is sandwiched between 2 RuvA tetramers; dsDNA enters through RuvA and exits via RuvB. An RuvB hexamer assembles on each DNA strand where it exits the tetramer. Each RuvB hexamer is contacted by two RuvA subunits (via domain III) on 2 adjacent RuvB subunits; this complex drives branch migration. In the full resolvosome a probable DNA-RuvA(4)-RuvB(12)-RuvC(2) complex forms which resolves the HJ.</text>
</comment>
<comment type="subcellular location">
    <subcellularLocation>
        <location evidence="1">Cytoplasm</location>
    </subcellularLocation>
</comment>
<comment type="domain">
    <text evidence="1">Has 3 domains, the large (RuvB-L) and small ATPase (RuvB-S) domains and the C-terminal head (RuvB-H) domain. The head domain binds DNA, while the ATPase domains jointly bind ATP, ADP or are empty depending on the state of the subunit in the translocation cycle. During a single DNA translocation step the structure of each domain remains the same, but their relative positions change.</text>
</comment>
<comment type="similarity">
    <text evidence="1">Belongs to the RuvB family.</text>
</comment>
<dbReference type="EC" id="3.6.4.-" evidence="1"/>
<dbReference type="EMBL" id="CP001396">
    <property type="protein sequence ID" value="ACR62041.1"/>
    <property type="molecule type" value="Genomic_DNA"/>
</dbReference>
<dbReference type="RefSeq" id="WP_000568519.1">
    <property type="nucleotide sequence ID" value="NC_012759.1"/>
</dbReference>
<dbReference type="SMR" id="C4ZQE4"/>
<dbReference type="GeneID" id="75202735"/>
<dbReference type="KEGG" id="ebw:BWG_1674"/>
<dbReference type="HOGENOM" id="CLU_055599_1_0_6"/>
<dbReference type="GO" id="GO:0005737">
    <property type="term" value="C:cytoplasm"/>
    <property type="evidence" value="ECO:0007669"/>
    <property type="project" value="UniProtKB-SubCell"/>
</dbReference>
<dbReference type="GO" id="GO:0048476">
    <property type="term" value="C:Holliday junction resolvase complex"/>
    <property type="evidence" value="ECO:0007669"/>
    <property type="project" value="UniProtKB-UniRule"/>
</dbReference>
<dbReference type="GO" id="GO:0005524">
    <property type="term" value="F:ATP binding"/>
    <property type="evidence" value="ECO:0007669"/>
    <property type="project" value="UniProtKB-UniRule"/>
</dbReference>
<dbReference type="GO" id="GO:0016887">
    <property type="term" value="F:ATP hydrolysis activity"/>
    <property type="evidence" value="ECO:0007669"/>
    <property type="project" value="InterPro"/>
</dbReference>
<dbReference type="GO" id="GO:0000400">
    <property type="term" value="F:four-way junction DNA binding"/>
    <property type="evidence" value="ECO:0007669"/>
    <property type="project" value="UniProtKB-UniRule"/>
</dbReference>
<dbReference type="GO" id="GO:0009378">
    <property type="term" value="F:four-way junction helicase activity"/>
    <property type="evidence" value="ECO:0007669"/>
    <property type="project" value="InterPro"/>
</dbReference>
<dbReference type="GO" id="GO:0006310">
    <property type="term" value="P:DNA recombination"/>
    <property type="evidence" value="ECO:0007669"/>
    <property type="project" value="UniProtKB-UniRule"/>
</dbReference>
<dbReference type="GO" id="GO:0006281">
    <property type="term" value="P:DNA repair"/>
    <property type="evidence" value="ECO:0007669"/>
    <property type="project" value="UniProtKB-UniRule"/>
</dbReference>
<dbReference type="GO" id="GO:0009432">
    <property type="term" value="P:SOS response"/>
    <property type="evidence" value="ECO:0007669"/>
    <property type="project" value="UniProtKB-UniRule"/>
</dbReference>
<dbReference type="CDD" id="cd00009">
    <property type="entry name" value="AAA"/>
    <property type="match status" value="1"/>
</dbReference>
<dbReference type="FunFam" id="1.10.10.10:FF:000086">
    <property type="entry name" value="Holliday junction ATP-dependent DNA helicase RuvB"/>
    <property type="match status" value="1"/>
</dbReference>
<dbReference type="FunFam" id="1.10.8.60:FF:000023">
    <property type="entry name" value="Holliday junction ATP-dependent DNA helicase RuvB"/>
    <property type="match status" value="1"/>
</dbReference>
<dbReference type="FunFam" id="3.40.50.300:FF:000073">
    <property type="entry name" value="Holliday junction ATP-dependent DNA helicase RuvB"/>
    <property type="match status" value="1"/>
</dbReference>
<dbReference type="Gene3D" id="1.10.8.60">
    <property type="match status" value="1"/>
</dbReference>
<dbReference type="Gene3D" id="3.40.50.300">
    <property type="entry name" value="P-loop containing nucleotide triphosphate hydrolases"/>
    <property type="match status" value="1"/>
</dbReference>
<dbReference type="Gene3D" id="1.10.10.10">
    <property type="entry name" value="Winged helix-like DNA-binding domain superfamily/Winged helix DNA-binding domain"/>
    <property type="match status" value="1"/>
</dbReference>
<dbReference type="HAMAP" id="MF_00016">
    <property type="entry name" value="DNA_HJ_migration_RuvB"/>
    <property type="match status" value="1"/>
</dbReference>
<dbReference type="InterPro" id="IPR003593">
    <property type="entry name" value="AAA+_ATPase"/>
</dbReference>
<dbReference type="InterPro" id="IPR041445">
    <property type="entry name" value="AAA_lid_4"/>
</dbReference>
<dbReference type="InterPro" id="IPR004605">
    <property type="entry name" value="DNA_helicase_Holl-junc_RuvB"/>
</dbReference>
<dbReference type="InterPro" id="IPR027417">
    <property type="entry name" value="P-loop_NTPase"/>
</dbReference>
<dbReference type="InterPro" id="IPR008824">
    <property type="entry name" value="RuvB-like_N"/>
</dbReference>
<dbReference type="InterPro" id="IPR008823">
    <property type="entry name" value="RuvB_C"/>
</dbReference>
<dbReference type="InterPro" id="IPR036388">
    <property type="entry name" value="WH-like_DNA-bd_sf"/>
</dbReference>
<dbReference type="InterPro" id="IPR036390">
    <property type="entry name" value="WH_DNA-bd_sf"/>
</dbReference>
<dbReference type="NCBIfam" id="NF000868">
    <property type="entry name" value="PRK00080.1"/>
    <property type="match status" value="1"/>
</dbReference>
<dbReference type="NCBIfam" id="TIGR00635">
    <property type="entry name" value="ruvB"/>
    <property type="match status" value="1"/>
</dbReference>
<dbReference type="PANTHER" id="PTHR42848">
    <property type="match status" value="1"/>
</dbReference>
<dbReference type="PANTHER" id="PTHR42848:SF1">
    <property type="entry name" value="HOLLIDAY JUNCTION BRANCH MIGRATION COMPLEX SUBUNIT RUVB"/>
    <property type="match status" value="1"/>
</dbReference>
<dbReference type="Pfam" id="PF17864">
    <property type="entry name" value="AAA_lid_4"/>
    <property type="match status" value="1"/>
</dbReference>
<dbReference type="Pfam" id="PF05491">
    <property type="entry name" value="RuvB_C"/>
    <property type="match status" value="1"/>
</dbReference>
<dbReference type="Pfam" id="PF05496">
    <property type="entry name" value="RuvB_N"/>
    <property type="match status" value="1"/>
</dbReference>
<dbReference type="SMART" id="SM00382">
    <property type="entry name" value="AAA"/>
    <property type="match status" value="1"/>
</dbReference>
<dbReference type="SUPFAM" id="SSF52540">
    <property type="entry name" value="P-loop containing nucleoside triphosphate hydrolases"/>
    <property type="match status" value="1"/>
</dbReference>
<dbReference type="SUPFAM" id="SSF46785">
    <property type="entry name" value="Winged helix' DNA-binding domain"/>
    <property type="match status" value="1"/>
</dbReference>
<proteinExistence type="inferred from homology"/>
<gene>
    <name evidence="1" type="primary">ruvB</name>
    <name type="ordered locus">BWG_1674</name>
</gene>
<protein>
    <recommendedName>
        <fullName evidence="1">Holliday junction branch migration complex subunit RuvB</fullName>
        <ecNumber evidence="1">3.6.4.-</ecNumber>
    </recommendedName>
</protein>
<sequence length="336" mass="37174">MIEADRLISAGTTLPEDVADRAIRPKLLEEYVGQPQVRSQMEIFIKAAKLRGDALDHLLIFGPPGLGKTTLANIVANEMGVNLRTTSGPVLEKAGDLAAMLTNLEPHDVLFIDEIHRLSPVVEEVLYPAMEDYQLDIMIGEGPAARSIKIDLPPFTLIGATTRAGSLTSPLRDRFGIVQRLEFYQVPDLQYIVSRSARFMGLEMSDDGALEVARRARGTPRIANRLLRRVRDFAEVKHDGTISADIAAQALDMLNVDAEGFDYMDRKLLLAVIDKFFGGPVGLDNLAAAIGEERETIEDVLEPYLIQQGFLQRTPRGRMATTRAWNHFGITPPEMP</sequence>
<organism>
    <name type="scientific">Escherichia coli (strain K12 / MC4100 / BW2952)</name>
    <dbReference type="NCBI Taxonomy" id="595496"/>
    <lineage>
        <taxon>Bacteria</taxon>
        <taxon>Pseudomonadati</taxon>
        <taxon>Pseudomonadota</taxon>
        <taxon>Gammaproteobacteria</taxon>
        <taxon>Enterobacterales</taxon>
        <taxon>Enterobacteriaceae</taxon>
        <taxon>Escherichia</taxon>
    </lineage>
</organism>